<sequence>MGDNLKVIEADSVSYDYPDGSAGVREVSLEIFEGDRVGLIGANGSGKSTLILLLAGLLRPTKGKIRIFGREIDKKNVEEIRRKIGVVFQNPDDFLFNPTVRDELLYVPRQLEWSEEEMENAVKEYAEMFGITHLLNKPPFRLSGGEKKKVEIASVLIYKPEVLLLDEPTAYVDGKTKRLILKILEDFKGTLVIATHELDVAEKLADKFVLLNLEHRIEAAGGKEILKNEELLEKAGVI</sequence>
<keyword id="KW-0067">ATP-binding</keyword>
<keyword id="KW-1003">Cell membrane</keyword>
<keyword id="KW-0472">Membrane</keyword>
<keyword id="KW-0547">Nucleotide-binding</keyword>
<keyword id="KW-1185">Reference proteome</keyword>
<keyword id="KW-1278">Translocase</keyword>
<keyword id="KW-0813">Transport</keyword>
<protein>
    <recommendedName>
        <fullName>Putative ABC transporter ATP-binding protein AF_1841</fullName>
        <ecNumber>7.-.-.-</ecNumber>
    </recommendedName>
</protein>
<gene>
    <name type="ordered locus">AF_1841</name>
</gene>
<evidence type="ECO:0000250" key="1"/>
<evidence type="ECO:0000255" key="2">
    <source>
        <dbReference type="PROSITE-ProRule" id="PRU00434"/>
    </source>
</evidence>
<evidence type="ECO:0000305" key="3"/>
<feature type="chain" id="PRO_0000092130" description="Putative ABC transporter ATP-binding protein AF_1841">
    <location>
        <begin position="1"/>
        <end position="238"/>
    </location>
</feature>
<feature type="domain" description="ABC transporter" evidence="2">
    <location>
        <begin position="8"/>
        <end position="238"/>
    </location>
</feature>
<feature type="binding site" evidence="2">
    <location>
        <begin position="41"/>
        <end position="48"/>
    </location>
    <ligand>
        <name>ATP</name>
        <dbReference type="ChEBI" id="CHEBI:30616"/>
    </ligand>
</feature>
<organism>
    <name type="scientific">Archaeoglobus fulgidus (strain ATCC 49558 / DSM 4304 / JCM 9628 / NBRC 100126 / VC-16)</name>
    <dbReference type="NCBI Taxonomy" id="224325"/>
    <lineage>
        <taxon>Archaea</taxon>
        <taxon>Methanobacteriati</taxon>
        <taxon>Methanobacteriota</taxon>
        <taxon>Archaeoglobi</taxon>
        <taxon>Archaeoglobales</taxon>
        <taxon>Archaeoglobaceae</taxon>
        <taxon>Archaeoglobus</taxon>
    </lineage>
</organism>
<name>Y1841_ARCFU</name>
<proteinExistence type="inferred from homology"/>
<dbReference type="EC" id="7.-.-.-"/>
<dbReference type="EMBL" id="AE000782">
    <property type="protein sequence ID" value="AAB89412.1"/>
    <property type="molecule type" value="Genomic_DNA"/>
</dbReference>
<dbReference type="PIR" id="H69479">
    <property type="entry name" value="H69479"/>
</dbReference>
<dbReference type="RefSeq" id="WP_010879335.1">
    <property type="nucleotide sequence ID" value="NC_000917.1"/>
</dbReference>
<dbReference type="SMR" id="O28437"/>
<dbReference type="STRING" id="224325.AF_1841"/>
<dbReference type="PaxDb" id="224325-AF_1841"/>
<dbReference type="EnsemblBacteria" id="AAB89412">
    <property type="protein sequence ID" value="AAB89412"/>
    <property type="gene ID" value="AF_1841"/>
</dbReference>
<dbReference type="GeneID" id="1485062"/>
<dbReference type="KEGG" id="afu:AF_1841"/>
<dbReference type="eggNOG" id="arCOG00202">
    <property type="taxonomic scope" value="Archaea"/>
</dbReference>
<dbReference type="HOGENOM" id="CLU_000604_1_22_2"/>
<dbReference type="OrthoDB" id="18209at2157"/>
<dbReference type="PhylomeDB" id="O28437"/>
<dbReference type="Proteomes" id="UP000002199">
    <property type="component" value="Chromosome"/>
</dbReference>
<dbReference type="GO" id="GO:0043190">
    <property type="term" value="C:ATP-binding cassette (ABC) transporter complex"/>
    <property type="evidence" value="ECO:0007669"/>
    <property type="project" value="TreeGrafter"/>
</dbReference>
<dbReference type="GO" id="GO:0005524">
    <property type="term" value="F:ATP binding"/>
    <property type="evidence" value="ECO:0007669"/>
    <property type="project" value="UniProtKB-KW"/>
</dbReference>
<dbReference type="GO" id="GO:0016887">
    <property type="term" value="F:ATP hydrolysis activity"/>
    <property type="evidence" value="ECO:0007669"/>
    <property type="project" value="InterPro"/>
</dbReference>
<dbReference type="GO" id="GO:0042626">
    <property type="term" value="F:ATPase-coupled transmembrane transporter activity"/>
    <property type="evidence" value="ECO:0007669"/>
    <property type="project" value="TreeGrafter"/>
</dbReference>
<dbReference type="CDD" id="cd03225">
    <property type="entry name" value="ABC_cobalt_CbiO_domain1"/>
    <property type="match status" value="1"/>
</dbReference>
<dbReference type="FunFam" id="3.40.50.300:FF:000224">
    <property type="entry name" value="Energy-coupling factor transporter ATP-binding protein EcfA"/>
    <property type="match status" value="1"/>
</dbReference>
<dbReference type="Gene3D" id="3.40.50.300">
    <property type="entry name" value="P-loop containing nucleotide triphosphate hydrolases"/>
    <property type="match status" value="1"/>
</dbReference>
<dbReference type="InterPro" id="IPR003593">
    <property type="entry name" value="AAA+_ATPase"/>
</dbReference>
<dbReference type="InterPro" id="IPR003439">
    <property type="entry name" value="ABC_transporter-like_ATP-bd"/>
</dbReference>
<dbReference type="InterPro" id="IPR017871">
    <property type="entry name" value="ABC_transporter-like_CS"/>
</dbReference>
<dbReference type="InterPro" id="IPR015856">
    <property type="entry name" value="ABC_transpr_CbiO/EcfA_su"/>
</dbReference>
<dbReference type="InterPro" id="IPR050095">
    <property type="entry name" value="ECF_ABC_transporter_ATP-bd"/>
</dbReference>
<dbReference type="InterPro" id="IPR027417">
    <property type="entry name" value="P-loop_NTPase"/>
</dbReference>
<dbReference type="PANTHER" id="PTHR43553">
    <property type="entry name" value="HEAVY METAL TRANSPORTER"/>
    <property type="match status" value="1"/>
</dbReference>
<dbReference type="Pfam" id="PF00005">
    <property type="entry name" value="ABC_tran"/>
    <property type="match status" value="1"/>
</dbReference>
<dbReference type="SMART" id="SM00382">
    <property type="entry name" value="AAA"/>
    <property type="match status" value="1"/>
</dbReference>
<dbReference type="SUPFAM" id="SSF52540">
    <property type="entry name" value="P-loop containing nucleoside triphosphate hydrolases"/>
    <property type="match status" value="1"/>
</dbReference>
<dbReference type="PROSITE" id="PS00211">
    <property type="entry name" value="ABC_TRANSPORTER_1"/>
    <property type="match status" value="1"/>
</dbReference>
<dbReference type="PROSITE" id="PS50893">
    <property type="entry name" value="ABC_TRANSPORTER_2"/>
    <property type="match status" value="1"/>
</dbReference>
<reference key="1">
    <citation type="journal article" date="1997" name="Nature">
        <title>The complete genome sequence of the hyperthermophilic, sulphate-reducing archaeon Archaeoglobus fulgidus.</title>
        <authorList>
            <person name="Klenk H.-P."/>
            <person name="Clayton R.A."/>
            <person name="Tomb J.-F."/>
            <person name="White O."/>
            <person name="Nelson K.E."/>
            <person name="Ketchum K.A."/>
            <person name="Dodson R.J."/>
            <person name="Gwinn M.L."/>
            <person name="Hickey E.K."/>
            <person name="Peterson J.D."/>
            <person name="Richardson D.L."/>
            <person name="Kerlavage A.R."/>
            <person name="Graham D.E."/>
            <person name="Kyrpides N.C."/>
            <person name="Fleischmann R.D."/>
            <person name="Quackenbush J."/>
            <person name="Lee N.H."/>
            <person name="Sutton G.G."/>
            <person name="Gill S.R."/>
            <person name="Kirkness E.F."/>
            <person name="Dougherty B.A."/>
            <person name="McKenney K."/>
            <person name="Adams M.D."/>
            <person name="Loftus B.J."/>
            <person name="Peterson S.N."/>
            <person name="Reich C.I."/>
            <person name="McNeil L.K."/>
            <person name="Badger J.H."/>
            <person name="Glodek A."/>
            <person name="Zhou L."/>
            <person name="Overbeek R."/>
            <person name="Gocayne J.D."/>
            <person name="Weidman J.F."/>
            <person name="McDonald L.A."/>
            <person name="Utterback T.R."/>
            <person name="Cotton M.D."/>
            <person name="Spriggs T."/>
            <person name="Artiach P."/>
            <person name="Kaine B.P."/>
            <person name="Sykes S.M."/>
            <person name="Sadow P.W."/>
            <person name="D'Andrea K.P."/>
            <person name="Bowman C."/>
            <person name="Fujii C."/>
            <person name="Garland S.A."/>
            <person name="Mason T.M."/>
            <person name="Olsen G.J."/>
            <person name="Fraser C.M."/>
            <person name="Smith H.O."/>
            <person name="Woese C.R."/>
            <person name="Venter J.C."/>
        </authorList>
    </citation>
    <scope>NUCLEOTIDE SEQUENCE [LARGE SCALE GENOMIC DNA]</scope>
    <source>
        <strain>ATCC 49558 / DSM 4304 / JCM 9628 / NBRC 100126 / VC-16</strain>
    </source>
</reference>
<comment type="function">
    <text evidence="1">Probably part of an ABC transporter complex. Responsible for energy coupling to the transport system (By similarity).</text>
</comment>
<comment type="subcellular location">
    <subcellularLocation>
        <location evidence="1">Cell membrane</location>
        <topology evidence="1">Peripheral membrane protein</topology>
    </subcellularLocation>
</comment>
<comment type="similarity">
    <text evidence="3">Belongs to the ABC transporter superfamily.</text>
</comment>
<accession>O28437</accession>